<protein>
    <recommendedName>
        <fullName evidence="8">Terpene cyclase ascI</fullName>
        <ecNumber evidence="6 7">5.4.99.-</ecNumber>
    </recommendedName>
    <alternativeName>
        <fullName evidence="8">Ascofuranone/ascochlorin biosynthesis clusters protein I</fullName>
    </alternativeName>
</protein>
<name>ASCI_ACREG</name>
<dbReference type="EC" id="5.4.99.-" evidence="6 7"/>
<dbReference type="EMBL" id="LC406757">
    <property type="protein sequence ID" value="BBF25321.1"/>
    <property type="molecule type" value="Genomic_DNA"/>
</dbReference>
<dbReference type="GlyCosmos" id="A0A455R4Z0">
    <property type="glycosylation" value="3 sites, No reported glycans"/>
</dbReference>
<dbReference type="UniPathway" id="UPA00213"/>
<dbReference type="GO" id="GO:0016020">
    <property type="term" value="C:membrane"/>
    <property type="evidence" value="ECO:0007669"/>
    <property type="project" value="UniProtKB-SubCell"/>
</dbReference>
<dbReference type="GO" id="GO:0016853">
    <property type="term" value="F:isomerase activity"/>
    <property type="evidence" value="ECO:0007669"/>
    <property type="project" value="UniProtKB-KW"/>
</dbReference>
<dbReference type="GO" id="GO:0016114">
    <property type="term" value="P:terpenoid biosynthetic process"/>
    <property type="evidence" value="ECO:0007669"/>
    <property type="project" value="UniProtKB-UniPathway"/>
</dbReference>
<reference key="1">
    <citation type="journal article" date="2019" name="Proc. Natl. Acad. Sci. U.S.A.">
        <title>Complete biosynthetic pathways of ascofuranone and ascochlorin in Acremonium egyptiacum.</title>
        <authorList>
            <person name="Araki Y."/>
            <person name="Awakawa T."/>
            <person name="Matsuzaki M."/>
            <person name="Cho R."/>
            <person name="Matsuda Y."/>
            <person name="Hoshino S."/>
            <person name="Shinohara Y."/>
            <person name="Yamamoto M."/>
            <person name="Kido Y."/>
            <person name="Inaoka D.K."/>
            <person name="Nagamune K."/>
            <person name="Ito K."/>
            <person name="Abe I."/>
            <person name="Kita K."/>
        </authorList>
    </citation>
    <scope>NUCLEOTIDE SEQUENCE [GENOMIC DNA]</scope>
    <scope>FUNCTION</scope>
    <scope>CATALYTIC ACTIVITY</scope>
    <scope>BIOPHYSICOCHEMICAL PROPERTIES</scope>
    <scope>DISRUPTION PHENOTYPE</scope>
    <scope>INDUCTION</scope>
    <scope>MUTAGENESIS OF ASP-61; GLU-103; ASP-296; GLU-353 AND ASP-355</scope>
    <scope>PATHWAY</scope>
    <source>
        <strain>F-1392</strain>
    </source>
</reference>
<reference key="2">
    <citation type="journal article" date="2002" name="Biochim. Biophys. Acta">
        <title>Trypanosome alternative oxidase as a target of chemotherapy.</title>
        <authorList>
            <person name="Nihei C."/>
            <person name="Fukai Y."/>
            <person name="Kita K."/>
        </authorList>
    </citation>
    <scope>BIOTECHNOLOGY</scope>
</reference>
<reference key="3">
    <citation type="journal article" date="2003" name="Parasitol. Int.">
        <title>The efficacy of ascofuranone in a consecutive treatment on Trypanosoma brucei brucei in mice.</title>
        <authorList>
            <person name="Yabu Y."/>
            <person name="Yoshida A."/>
            <person name="Suzuki T."/>
            <person name="Nihei C."/>
            <person name="Kawai K."/>
            <person name="Minagawa N."/>
            <person name="Hosokawa T."/>
            <person name="Nagai K."/>
            <person name="Kita K."/>
            <person name="Ohta N."/>
        </authorList>
    </citation>
    <scope>BIOTECHNOLOGY</scope>
</reference>
<reference key="4">
    <citation type="journal article" date="2010" name="Parasitol. Int.">
        <title>Trypanosome alternative oxidase, a potential therapeutic target for sleeping sickness, is conserved among Trypanosoma brucei subspecies.</title>
        <authorList>
            <person name="Nakamura K."/>
            <person name="Fujioka S."/>
            <person name="Fukumoto S."/>
            <person name="Inoue N."/>
            <person name="Sakamoto K."/>
            <person name="Hirata H."/>
            <person name="Kido Y."/>
            <person name="Yabu Y."/>
            <person name="Suzuki T."/>
            <person name="Watanabe Y."/>
            <person name="Saimoto H."/>
            <person name="Akiyama H."/>
            <person name="Kita K."/>
        </authorList>
    </citation>
    <scope>BIOTECHNOLOGY</scope>
</reference>
<reference key="5">
    <citation type="journal article" date="2022" name="J. Gen. Appl. Microbiol.">
        <title>Heterologous production of ascofuranone and ilicicolin A in Aspergillus sojae.</title>
        <authorList>
            <person name="Araki Y."/>
            <person name="Shinohara Y."/>
            <person name="Hara S."/>
            <person name="Sato A."/>
            <person name="Sakaue R."/>
            <person name="Gomi K."/>
            <person name="Kita K."/>
            <person name="Ito K."/>
        </authorList>
    </citation>
    <scope>FUNCTION</scope>
    <scope>CATALYTIC ACTIVITY</scope>
    <scope>PATHWAY</scope>
</reference>
<evidence type="ECO:0000255" key="1"/>
<evidence type="ECO:0000255" key="2">
    <source>
        <dbReference type="PROSITE-ProRule" id="PRU00498"/>
    </source>
</evidence>
<evidence type="ECO:0000269" key="3">
    <source>
    </source>
</evidence>
<evidence type="ECO:0000269" key="4">
    <source>
    </source>
</evidence>
<evidence type="ECO:0000269" key="5">
    <source>
    </source>
</evidence>
<evidence type="ECO:0000269" key="6">
    <source>
    </source>
</evidence>
<evidence type="ECO:0000269" key="7">
    <source>
    </source>
</evidence>
<evidence type="ECO:0000303" key="8">
    <source>
    </source>
</evidence>
<evidence type="ECO:0000305" key="9"/>
<sequence>MPQLAGKLILAGLIPLGAWVLHGFASCNGLIQMFEDFGKQTVLSDGVTDYTGAFTGLEGLDRLLRTLLNFFWPVANGHDWALSLHAFMFAGQGVPLLVLNMLEGARPGNKSLVVSYVTVFGILYMVVGLAIMAPLYLFLHLLTSRTATAPSKAKVAVDPNTAKAVGFGVFVGYVLPTIFMSLPHPSLLSTDTKVLSVVFWQAVPLWASVCAYFASTALGQSATSRSSSNLPSALGAVYAASLIIATATHVATFAISANLSDTWSGIFTFLIPPNPFNTDMRISSFLEGATWFLQWDYTMMSLAYMVWAIGIRHGVEVPRSSHHFETLGKIALRSMAKLLVMGPIGAALSLVWERDQLLWQLDSESGEKGEKNRSRRMSRKWMFS</sequence>
<keyword id="KW-0325">Glycoprotein</keyword>
<keyword id="KW-0413">Isomerase</keyword>
<keyword id="KW-0472">Membrane</keyword>
<keyword id="KW-0732">Signal</keyword>
<keyword id="KW-0812">Transmembrane</keyword>
<keyword id="KW-1133">Transmembrane helix</keyword>
<organism>
    <name type="scientific">Acremonium egyptiacum</name>
    <name type="common">Oospora egyptiaca</name>
    <dbReference type="NCBI Taxonomy" id="749675"/>
    <lineage>
        <taxon>Eukaryota</taxon>
        <taxon>Fungi</taxon>
        <taxon>Dikarya</taxon>
        <taxon>Ascomycota</taxon>
        <taxon>Pezizomycotina</taxon>
        <taxon>Sordariomycetes</taxon>
        <taxon>Hypocreomycetidae</taxon>
        <taxon>Hypocreales</taxon>
        <taxon>Hypocreales incertae sedis</taxon>
        <taxon>Acremonium</taxon>
    </lineage>
</organism>
<accession>A0A455R4Z0</accession>
<gene>
    <name evidence="8" type="primary">ascI</name>
</gene>
<proteinExistence type="evidence at protein level"/>
<comment type="function">
    <text evidence="6 7">Epoxide hydrolase; part of the asc-2 gene cluster that mediates the biosynthesis of ascofuranone, a strong inhibitor of cyanide-insensitive alternative oxidases and a promising drug candidate against African trypanosomiasis (PubMed:30952781, PubMed:35418536). The first step in the pathway is performed by the non-reducing polyketide synthase ascC that produces orsellinic acid by condensing acetyl-CoA with 3 malonyl-CoA units (PubMed:30952781, PubMed:35418536). Orsellinic acid is then prenylated by the prenyltransferase ascA to yield ilicicolinic acid B (PubMed:30952781, PubMed:35418536). Ilicicolinic acid B is further reduced to ilicicolin B by the reductase ascB (PubMed:30952781, PubMed:35418536). The halogenase ascD then chlorinates ilicicolin B to produce ilicicolin A which is converted to ilicicolin A epoxide by the cytochrome P450 monooxygenase ascE that catalyzes stereoselective epoxidation of the terminal double bond of the prenyl group (PubMed:30952781, PubMed:35418536). Ilicicolin A epoxide is the last common precursor for the biosynthesis of ascofuranone and ascochlorin (PubMed:30952781, PubMed:35418536). The terpene cyclase ascF produces a monocyclic terpene, and the cyclization reaction is proposed to be initiated by protonation of the terminal epoxide of ilicicolin A epoxide to generate a monocyclic tertiarycation, which is followed by a series of hydride and methyl shifts with abstraction of proton, leading to the formation of the (14S,15R,19R)-trimethylcyclohexanone ring structure of ilicicolin C, which is finally reduced to ascochlorin by the dehydrogenase ascG (PubMed:30952781). On the other hand, ilicicolin A epoxide is hydroxylated by the cytochrome P450 monooxygenase ascH, and the resultant product is cyclized by the terpene cyclase ascI to ascofuranol via protonation-initiated epoxide ring opening, which facilitates the 6-endo-tet cyclization to form the tetrahy-drofuran ring (PubMed:30952781). Finally, ascofuranol is oxidized into ascofuranone by ascJ (PubMed:30952781, PubMed:35418536).</text>
</comment>
<comment type="catalytic activity">
    <reaction evidence="6 7">
        <text>16-hydroxy-ilicicolin A epoxide = ascofuranol</text>
        <dbReference type="Rhea" id="RHEA:63108"/>
        <dbReference type="ChEBI" id="CHEBI:146158"/>
        <dbReference type="ChEBI" id="CHEBI:146159"/>
    </reaction>
    <physiologicalReaction direction="left-to-right" evidence="6 7">
        <dbReference type="Rhea" id="RHEA:63109"/>
    </physiologicalReaction>
</comment>
<comment type="biophysicochemical properties">
    <kinetics>
        <KM evidence="6">50.4 uM for the product of ascH</KM>
        <Vmax evidence="6">129.0 nmol/min/mg enzyme toward the product of ascH</Vmax>
    </kinetics>
</comment>
<comment type="pathway">
    <text evidence="6 7">Secondary metabolite biosynthesis; terpenoid biosynthesis.</text>
</comment>
<comment type="subcellular location">
    <subcellularLocation>
        <location evidence="1">Membrane</location>
        <topology evidence="1">Multi-pass membrane protein</topology>
    </subcellularLocation>
</comment>
<comment type="induction">
    <text evidence="6">Expression is induced on AF medium.</text>
</comment>
<comment type="disruption phenotype">
    <text evidence="6">Impairs the production of ascofuranone and leads to the accumulation of the product of ascH.</text>
</comment>
<comment type="biotechnology">
    <text evidence="3 4 5">Ascofuranone is a specific inhibitor of trypanosome alternative oxidase (TAO), and quickly kills African trypanosomes in vitro and cures infected mice. As an essential factor for trypanosome survival, TAO is a promising drug target due to the absence of alternative oxidases in the mammalian host.</text>
</comment>
<comment type="similarity">
    <text evidence="9">Belongs to the membrane-bound ascI terpene cyclase family.</text>
</comment>
<feature type="signal peptide" evidence="1">
    <location>
        <begin position="1"/>
        <end position="25"/>
    </location>
</feature>
<feature type="chain" id="PRO_5019795226" description="Terpene cyclase ascI" evidence="1">
    <location>
        <begin position="26"/>
        <end position="384"/>
    </location>
</feature>
<feature type="transmembrane region" description="Helical" evidence="1">
    <location>
        <begin position="82"/>
        <end position="102"/>
    </location>
</feature>
<feature type="transmembrane region" description="Helical" evidence="1">
    <location>
        <begin position="119"/>
        <end position="139"/>
    </location>
</feature>
<feature type="transmembrane region" description="Helical" evidence="1">
    <location>
        <begin position="164"/>
        <end position="184"/>
    </location>
</feature>
<feature type="transmembrane region" description="Helical" evidence="1">
    <location>
        <begin position="194"/>
        <end position="214"/>
    </location>
</feature>
<feature type="transmembrane region" description="Helical" evidence="1">
    <location>
        <begin position="235"/>
        <end position="255"/>
    </location>
</feature>
<feature type="transmembrane region" description="Helical" evidence="1">
    <location>
        <begin position="291"/>
        <end position="311"/>
    </location>
</feature>
<feature type="transmembrane region" description="Helical" evidence="1">
    <location>
        <begin position="330"/>
        <end position="350"/>
    </location>
</feature>
<feature type="glycosylation site" description="N-linked (GlcNAc...) asparagine" evidence="2">
    <location>
        <position position="109"/>
    </location>
</feature>
<feature type="glycosylation site" description="N-linked (GlcNAc...) asparagine" evidence="2">
    <location>
        <position position="258"/>
    </location>
</feature>
<feature type="glycosylation site" description="N-linked (GlcNAc...) asparagine" evidence="2">
    <location>
        <position position="372"/>
    </location>
</feature>
<feature type="mutagenesis site" description="Leads to significant loss of activity." evidence="6">
    <original>D</original>
    <variation>A</variation>
    <location>
        <position position="61"/>
    </location>
</feature>
<feature type="mutagenesis site" description="Leads to significant loss of activity." evidence="6">
    <original>E</original>
    <variation>A</variation>
    <location>
        <position position="103"/>
    </location>
</feature>
<feature type="mutagenesis site" description="Leads to significant loss of activity." evidence="6">
    <original>D</original>
    <variation>A</variation>
    <location>
        <position position="296"/>
    </location>
</feature>
<feature type="mutagenesis site" description="Leads to significant loss of activity." evidence="6">
    <original>E</original>
    <variation>A</variation>
    <location>
        <position position="353"/>
    </location>
</feature>
<feature type="mutagenesis site" description="Leads to significant loss of activity." evidence="6">
    <original>D</original>
    <variation>A</variation>
    <location>
        <position position="355"/>
    </location>
</feature>